<protein>
    <recommendedName>
        <fullName>Tryptophan synthase beta chain</fullName>
        <ecNumber>4.2.1.20</ecNumber>
    </recommendedName>
</protein>
<dbReference type="EC" id="4.2.1.20"/>
<dbReference type="EMBL" id="BA000001">
    <property type="protein sequence ID" value="BAA30695.1"/>
    <property type="molecule type" value="Genomic_DNA"/>
</dbReference>
<dbReference type="PIR" id="G71036">
    <property type="entry name" value="G71036"/>
</dbReference>
<dbReference type="RefSeq" id="WP_010885657.1">
    <property type="nucleotide sequence ID" value="NC_000961.1"/>
</dbReference>
<dbReference type="SMR" id="O59265"/>
<dbReference type="STRING" id="70601.gene:9378573"/>
<dbReference type="EnsemblBacteria" id="BAA30695">
    <property type="protein sequence ID" value="BAA30695"/>
    <property type="gene ID" value="BAA30695"/>
</dbReference>
<dbReference type="GeneID" id="1443897"/>
<dbReference type="KEGG" id="pho:PH1583"/>
<dbReference type="eggNOG" id="arCOG01432">
    <property type="taxonomic scope" value="Archaea"/>
</dbReference>
<dbReference type="UniPathway" id="UPA00035">
    <property type="reaction ID" value="UER00044"/>
</dbReference>
<dbReference type="Proteomes" id="UP000000752">
    <property type="component" value="Chromosome"/>
</dbReference>
<dbReference type="GO" id="GO:0005737">
    <property type="term" value="C:cytoplasm"/>
    <property type="evidence" value="ECO:0007669"/>
    <property type="project" value="TreeGrafter"/>
</dbReference>
<dbReference type="GO" id="GO:0052684">
    <property type="term" value="F:L-serine hydro-lyase (adding indole, L-tryptophan-forming) activity"/>
    <property type="evidence" value="ECO:0007669"/>
    <property type="project" value="TreeGrafter"/>
</dbReference>
<dbReference type="GO" id="GO:0030170">
    <property type="term" value="F:pyridoxal phosphate binding"/>
    <property type="evidence" value="ECO:0007669"/>
    <property type="project" value="InterPro"/>
</dbReference>
<dbReference type="GO" id="GO:0004834">
    <property type="term" value="F:tryptophan synthase activity"/>
    <property type="evidence" value="ECO:0007669"/>
    <property type="project" value="UniProtKB-UniRule"/>
</dbReference>
<dbReference type="CDD" id="cd06446">
    <property type="entry name" value="Trp-synth_B"/>
    <property type="match status" value="1"/>
</dbReference>
<dbReference type="Gene3D" id="3.40.50.1100">
    <property type="match status" value="2"/>
</dbReference>
<dbReference type="HAMAP" id="MF_00133">
    <property type="entry name" value="Trp_synth_beta"/>
    <property type="match status" value="1"/>
</dbReference>
<dbReference type="InterPro" id="IPR006316">
    <property type="entry name" value="Trp_synth_b-like"/>
</dbReference>
<dbReference type="InterPro" id="IPR006653">
    <property type="entry name" value="Trp_synth_b_CS"/>
</dbReference>
<dbReference type="InterPro" id="IPR006654">
    <property type="entry name" value="Trp_synth_beta"/>
</dbReference>
<dbReference type="InterPro" id="IPR023026">
    <property type="entry name" value="Trp_synth_beta/beta-like"/>
</dbReference>
<dbReference type="InterPro" id="IPR001926">
    <property type="entry name" value="TrpB-like_PALP"/>
</dbReference>
<dbReference type="InterPro" id="IPR036052">
    <property type="entry name" value="TrpB-like_PALP_sf"/>
</dbReference>
<dbReference type="NCBIfam" id="NF009057">
    <property type="entry name" value="PRK12391.1"/>
    <property type="match status" value="1"/>
</dbReference>
<dbReference type="NCBIfam" id="TIGR01415">
    <property type="entry name" value="trpB_rel"/>
    <property type="match status" value="1"/>
</dbReference>
<dbReference type="PANTHER" id="PTHR48077:SF6">
    <property type="entry name" value="TRYPTOPHAN SYNTHASE"/>
    <property type="match status" value="1"/>
</dbReference>
<dbReference type="PANTHER" id="PTHR48077">
    <property type="entry name" value="TRYPTOPHAN SYNTHASE-RELATED"/>
    <property type="match status" value="1"/>
</dbReference>
<dbReference type="Pfam" id="PF00291">
    <property type="entry name" value="PALP"/>
    <property type="match status" value="1"/>
</dbReference>
<dbReference type="PIRSF" id="PIRSF001413">
    <property type="entry name" value="Trp_syn_beta"/>
    <property type="match status" value="1"/>
</dbReference>
<dbReference type="PIRSF" id="PIRSF500824">
    <property type="entry name" value="TrpB_prok"/>
    <property type="match status" value="1"/>
</dbReference>
<dbReference type="SUPFAM" id="SSF53686">
    <property type="entry name" value="Tryptophan synthase beta subunit-like PLP-dependent enzymes"/>
    <property type="match status" value="1"/>
</dbReference>
<dbReference type="PROSITE" id="PS00168">
    <property type="entry name" value="TRP_SYNTHASE_BETA"/>
    <property type="match status" value="1"/>
</dbReference>
<feature type="chain" id="PRO_0000099052" description="Tryptophan synthase beta chain">
    <location>
        <begin position="1"/>
        <end position="459"/>
    </location>
</feature>
<feature type="modified residue" description="N6-(pyridoxal phosphate)lysine" evidence="1">
    <location>
        <position position="121"/>
    </location>
</feature>
<gene>
    <name type="primary">trpB</name>
    <name type="ordered locus">PH1583</name>
</gene>
<comment type="function">
    <text evidence="1">The beta subunit is responsible for the synthesis of L-tryptophan from indole and L-serine.</text>
</comment>
<comment type="catalytic activity">
    <reaction>
        <text>(1S,2R)-1-C-(indol-3-yl)glycerol 3-phosphate + L-serine = D-glyceraldehyde 3-phosphate + L-tryptophan + H2O</text>
        <dbReference type="Rhea" id="RHEA:10532"/>
        <dbReference type="ChEBI" id="CHEBI:15377"/>
        <dbReference type="ChEBI" id="CHEBI:33384"/>
        <dbReference type="ChEBI" id="CHEBI:57912"/>
        <dbReference type="ChEBI" id="CHEBI:58866"/>
        <dbReference type="ChEBI" id="CHEBI:59776"/>
        <dbReference type="EC" id="4.2.1.20"/>
    </reaction>
</comment>
<comment type="cofactor">
    <cofactor evidence="1">
        <name>pyridoxal 5'-phosphate</name>
        <dbReference type="ChEBI" id="CHEBI:597326"/>
    </cofactor>
</comment>
<comment type="pathway">
    <text>Amino-acid biosynthesis; L-tryptophan biosynthesis; L-tryptophan from chorismate: step 5/5.</text>
</comment>
<comment type="subunit">
    <text evidence="1">Tetramer of two alpha and two beta chains.</text>
</comment>
<comment type="similarity">
    <text evidence="2">Belongs to the TrpB family.</text>
</comment>
<keyword id="KW-0028">Amino-acid biosynthesis</keyword>
<keyword id="KW-0057">Aromatic amino acid biosynthesis</keyword>
<keyword id="KW-0456">Lyase</keyword>
<keyword id="KW-0663">Pyridoxal phosphate</keyword>
<keyword id="KW-0822">Tryptophan biosynthesis</keyword>
<sequence>MIVFGSKAEIHAKSILKDGEIPKRWYNILPDLPEPLSPPLDPETNETINPEKLTRIFAKELIKQEFSEKRYIKIPKEVRELYAKIGRPTPLFRATNLEKILKTPARIYFKYEGATVTGSHKINTALAQAYYAKKEGIKRLVTETGAGQWGTALSLAGALIGLKVRVYMTRASYYQKPYRKILMEIYGAEVFPSPSENTEVGKRFLREDPNHPGSLGIAISEAIEDVLSDEKARYSLGSVLNHVLMHQTVIGLEAKKQVKEFEEPDVIIGCVGGGSNFAGLSYPFIKDVLDGKAEYEFIAVEPRAVPTMTKGVYTYDYGDSAGLTPKIKMYTLGHTYYVPPIHAGGLRYHGLAPTLSVLMNHGIVKPMAYHQTEVFEAAVLFAKAEGIVPAPESAHAVRAVIDKALEAKRKGEETVILFNLSGHGLLDLKGYEDYLEGKLEDYEPQILNLSMAPRPPNAL</sequence>
<accession>O59265</accession>
<reference key="1">
    <citation type="journal article" date="1998" name="DNA Res.">
        <title>Complete sequence and gene organization of the genome of a hyper-thermophilic archaebacterium, Pyrococcus horikoshii OT3.</title>
        <authorList>
            <person name="Kawarabayasi Y."/>
            <person name="Sawada M."/>
            <person name="Horikawa H."/>
            <person name="Haikawa Y."/>
            <person name="Hino Y."/>
            <person name="Yamamoto S."/>
            <person name="Sekine M."/>
            <person name="Baba S."/>
            <person name="Kosugi H."/>
            <person name="Hosoyama A."/>
            <person name="Nagai Y."/>
            <person name="Sakai M."/>
            <person name="Ogura K."/>
            <person name="Otsuka R."/>
            <person name="Nakazawa H."/>
            <person name="Takamiya M."/>
            <person name="Ohfuku Y."/>
            <person name="Funahashi T."/>
            <person name="Tanaka T."/>
            <person name="Kudoh Y."/>
            <person name="Yamazaki J."/>
            <person name="Kushida N."/>
            <person name="Oguchi A."/>
            <person name="Aoki K."/>
            <person name="Yoshizawa T."/>
            <person name="Nakamura Y."/>
            <person name="Robb F.T."/>
            <person name="Horikoshi K."/>
            <person name="Masuchi Y."/>
            <person name="Shizuya H."/>
            <person name="Kikuchi H."/>
        </authorList>
    </citation>
    <scope>NUCLEOTIDE SEQUENCE [LARGE SCALE GENOMIC DNA]</scope>
    <source>
        <strain>ATCC 700860 / DSM 12428 / JCM 9974 / NBRC 100139 / OT-3</strain>
    </source>
</reference>
<proteinExistence type="inferred from homology"/>
<name>TRPB_PYRHO</name>
<evidence type="ECO:0000250" key="1"/>
<evidence type="ECO:0000305" key="2"/>
<organism>
    <name type="scientific">Pyrococcus horikoshii (strain ATCC 700860 / DSM 12428 / JCM 9974 / NBRC 100139 / OT-3)</name>
    <dbReference type="NCBI Taxonomy" id="70601"/>
    <lineage>
        <taxon>Archaea</taxon>
        <taxon>Methanobacteriati</taxon>
        <taxon>Methanobacteriota</taxon>
        <taxon>Thermococci</taxon>
        <taxon>Thermococcales</taxon>
        <taxon>Thermococcaceae</taxon>
        <taxon>Pyrococcus</taxon>
    </lineage>
</organism>